<dbReference type="EC" id="2.7.7.101" evidence="1"/>
<dbReference type="EMBL" id="AE014075">
    <property type="protein sequence ID" value="AAN82262.1"/>
    <property type="molecule type" value="Genomic_DNA"/>
</dbReference>
<dbReference type="RefSeq" id="WP_000918851.1">
    <property type="nucleotide sequence ID" value="NC_004431.1"/>
</dbReference>
<dbReference type="BMRB" id="Q8FDG5"/>
<dbReference type="SMR" id="Q8FDG5"/>
<dbReference type="STRING" id="199310.c3817"/>
<dbReference type="KEGG" id="ecc:c3817"/>
<dbReference type="eggNOG" id="COG0358">
    <property type="taxonomic scope" value="Bacteria"/>
</dbReference>
<dbReference type="HOGENOM" id="CLU_013501_5_4_6"/>
<dbReference type="BioCyc" id="ECOL199310:C3817-MONOMER"/>
<dbReference type="Proteomes" id="UP000001410">
    <property type="component" value="Chromosome"/>
</dbReference>
<dbReference type="GO" id="GO:0005737">
    <property type="term" value="C:cytoplasm"/>
    <property type="evidence" value="ECO:0007669"/>
    <property type="project" value="TreeGrafter"/>
</dbReference>
<dbReference type="GO" id="GO:0000428">
    <property type="term" value="C:DNA-directed RNA polymerase complex"/>
    <property type="evidence" value="ECO:0007669"/>
    <property type="project" value="UniProtKB-KW"/>
</dbReference>
<dbReference type="GO" id="GO:1990077">
    <property type="term" value="C:primosome complex"/>
    <property type="evidence" value="ECO:0007669"/>
    <property type="project" value="UniProtKB-KW"/>
</dbReference>
<dbReference type="GO" id="GO:0003677">
    <property type="term" value="F:DNA binding"/>
    <property type="evidence" value="ECO:0007669"/>
    <property type="project" value="UniProtKB-KW"/>
</dbReference>
<dbReference type="GO" id="GO:0003899">
    <property type="term" value="F:DNA-directed RNA polymerase activity"/>
    <property type="evidence" value="ECO:0007669"/>
    <property type="project" value="InterPro"/>
</dbReference>
<dbReference type="GO" id="GO:0008270">
    <property type="term" value="F:zinc ion binding"/>
    <property type="evidence" value="ECO:0007669"/>
    <property type="project" value="UniProtKB-UniRule"/>
</dbReference>
<dbReference type="GO" id="GO:0006269">
    <property type="term" value="P:DNA replication, synthesis of primer"/>
    <property type="evidence" value="ECO:0007669"/>
    <property type="project" value="UniProtKB-UniRule"/>
</dbReference>
<dbReference type="CDD" id="cd03364">
    <property type="entry name" value="TOPRIM_DnaG_primases"/>
    <property type="match status" value="1"/>
</dbReference>
<dbReference type="FunFam" id="1.10.860.10:FF:000003">
    <property type="entry name" value="DNA primase"/>
    <property type="match status" value="1"/>
</dbReference>
<dbReference type="FunFam" id="1.20.50.20:FF:000001">
    <property type="entry name" value="DNA primase"/>
    <property type="match status" value="1"/>
</dbReference>
<dbReference type="FunFam" id="3.40.1360.10:FF:000002">
    <property type="entry name" value="DNA primase"/>
    <property type="match status" value="1"/>
</dbReference>
<dbReference type="FunFam" id="3.90.580.10:FF:000001">
    <property type="entry name" value="DNA primase"/>
    <property type="match status" value="1"/>
</dbReference>
<dbReference type="FunFam" id="3.90.980.10:FF:000001">
    <property type="entry name" value="DNA primase"/>
    <property type="match status" value="1"/>
</dbReference>
<dbReference type="Gene3D" id="3.40.1360.10">
    <property type="match status" value="1"/>
</dbReference>
<dbReference type="Gene3D" id="3.90.980.10">
    <property type="entry name" value="DNA primase, catalytic core, N-terminal domain"/>
    <property type="match status" value="1"/>
</dbReference>
<dbReference type="Gene3D" id="1.10.860.10">
    <property type="entry name" value="DNAb Helicase, Chain A"/>
    <property type="match status" value="1"/>
</dbReference>
<dbReference type="Gene3D" id="1.20.50.20">
    <property type="entry name" value="DnaG, RNA polymerase domain, helical bundle"/>
    <property type="match status" value="1"/>
</dbReference>
<dbReference type="Gene3D" id="3.90.580.10">
    <property type="entry name" value="Zinc finger, CHC2-type domain"/>
    <property type="match status" value="1"/>
</dbReference>
<dbReference type="HAMAP" id="MF_00974">
    <property type="entry name" value="DNA_primase_DnaG"/>
    <property type="match status" value="1"/>
</dbReference>
<dbReference type="InterPro" id="IPR016136">
    <property type="entry name" value="DNA_helicase_N/primase_C"/>
</dbReference>
<dbReference type="InterPro" id="IPR037068">
    <property type="entry name" value="DNA_primase_core_N_sf"/>
</dbReference>
<dbReference type="InterPro" id="IPR019475">
    <property type="entry name" value="DNA_primase_DnaB-bd"/>
</dbReference>
<dbReference type="InterPro" id="IPR006295">
    <property type="entry name" value="DNA_primase_DnaG"/>
</dbReference>
<dbReference type="InterPro" id="IPR013173">
    <property type="entry name" value="DNA_primase_DnaG_DnaB-bd_dom"/>
</dbReference>
<dbReference type="InterPro" id="IPR036977">
    <property type="entry name" value="DNA_primase_Znf_CHC2"/>
</dbReference>
<dbReference type="InterPro" id="IPR030846">
    <property type="entry name" value="DnaG_bac"/>
</dbReference>
<dbReference type="InterPro" id="IPR013264">
    <property type="entry name" value="DNAG_N"/>
</dbReference>
<dbReference type="InterPro" id="IPR050219">
    <property type="entry name" value="DnaG_primase"/>
</dbReference>
<dbReference type="InterPro" id="IPR034151">
    <property type="entry name" value="TOPRIM_DnaG_bac"/>
</dbReference>
<dbReference type="InterPro" id="IPR006171">
    <property type="entry name" value="TOPRIM_dom"/>
</dbReference>
<dbReference type="InterPro" id="IPR002694">
    <property type="entry name" value="Znf_CHC2"/>
</dbReference>
<dbReference type="NCBIfam" id="TIGR01391">
    <property type="entry name" value="dnaG"/>
    <property type="match status" value="1"/>
</dbReference>
<dbReference type="PANTHER" id="PTHR30313">
    <property type="entry name" value="DNA PRIMASE"/>
    <property type="match status" value="1"/>
</dbReference>
<dbReference type="PANTHER" id="PTHR30313:SF2">
    <property type="entry name" value="DNA PRIMASE"/>
    <property type="match status" value="1"/>
</dbReference>
<dbReference type="Pfam" id="PF10410">
    <property type="entry name" value="DnaB_bind"/>
    <property type="match status" value="1"/>
</dbReference>
<dbReference type="Pfam" id="PF08278">
    <property type="entry name" value="DnaG_DnaB_bind"/>
    <property type="match status" value="1"/>
</dbReference>
<dbReference type="Pfam" id="PF08275">
    <property type="entry name" value="DNAG_N"/>
    <property type="match status" value="1"/>
</dbReference>
<dbReference type="Pfam" id="PF13155">
    <property type="entry name" value="Toprim_2"/>
    <property type="match status" value="1"/>
</dbReference>
<dbReference type="Pfam" id="PF01807">
    <property type="entry name" value="Zn_ribbon_DnaG"/>
    <property type="match status" value="1"/>
</dbReference>
<dbReference type="PIRSF" id="PIRSF002811">
    <property type="entry name" value="DnaG"/>
    <property type="match status" value="1"/>
</dbReference>
<dbReference type="SMART" id="SM00766">
    <property type="entry name" value="DnaG_DnaB_bind"/>
    <property type="match status" value="1"/>
</dbReference>
<dbReference type="SMART" id="SM00493">
    <property type="entry name" value="TOPRIM"/>
    <property type="match status" value="1"/>
</dbReference>
<dbReference type="SMART" id="SM00400">
    <property type="entry name" value="ZnF_CHCC"/>
    <property type="match status" value="1"/>
</dbReference>
<dbReference type="SUPFAM" id="SSF56731">
    <property type="entry name" value="DNA primase core"/>
    <property type="match status" value="1"/>
</dbReference>
<dbReference type="SUPFAM" id="SSF117023">
    <property type="entry name" value="DNA primase DnaG, C-terminal domain"/>
    <property type="match status" value="1"/>
</dbReference>
<dbReference type="SUPFAM" id="SSF57783">
    <property type="entry name" value="Zinc beta-ribbon"/>
    <property type="match status" value="1"/>
</dbReference>
<dbReference type="PROSITE" id="PS50880">
    <property type="entry name" value="TOPRIM"/>
    <property type="match status" value="1"/>
</dbReference>
<keyword id="KW-0235">DNA replication</keyword>
<keyword id="KW-0238">DNA-binding</keyword>
<keyword id="KW-0240">DNA-directed RNA polymerase</keyword>
<keyword id="KW-0460">Magnesium</keyword>
<keyword id="KW-0479">Metal-binding</keyword>
<keyword id="KW-0548">Nucleotidyltransferase</keyword>
<keyword id="KW-0639">Primosome</keyword>
<keyword id="KW-1185">Reference proteome</keyword>
<keyword id="KW-0804">Transcription</keyword>
<keyword id="KW-0808">Transferase</keyword>
<keyword id="KW-0862">Zinc</keyword>
<keyword id="KW-0863">Zinc-finger</keyword>
<accession>Q8FDG5</accession>
<protein>
    <recommendedName>
        <fullName evidence="1">DNA primase</fullName>
        <ecNumber evidence="1">2.7.7.101</ecNumber>
    </recommendedName>
</protein>
<reference key="1">
    <citation type="journal article" date="2002" name="Proc. Natl. Acad. Sci. U.S.A.">
        <title>Extensive mosaic structure revealed by the complete genome sequence of uropathogenic Escherichia coli.</title>
        <authorList>
            <person name="Welch R.A."/>
            <person name="Burland V."/>
            <person name="Plunkett G. III"/>
            <person name="Redford P."/>
            <person name="Roesch P."/>
            <person name="Rasko D."/>
            <person name="Buckles E.L."/>
            <person name="Liou S.-R."/>
            <person name="Boutin A."/>
            <person name="Hackett J."/>
            <person name="Stroud D."/>
            <person name="Mayhew G.F."/>
            <person name="Rose D.J."/>
            <person name="Zhou S."/>
            <person name="Schwartz D.C."/>
            <person name="Perna N.T."/>
            <person name="Mobley H.L.T."/>
            <person name="Donnenberg M.S."/>
            <person name="Blattner F.R."/>
        </authorList>
    </citation>
    <scope>NUCLEOTIDE SEQUENCE [LARGE SCALE GENOMIC DNA]</scope>
    <source>
        <strain>CFT073 / ATCC 700928 / UPEC</strain>
    </source>
</reference>
<proteinExistence type="inferred from homology"/>
<name>DNAG_ECOL6</name>
<comment type="function">
    <text evidence="1">RNA polymerase that catalyzes the synthesis of short RNA molecules used as primers for DNA polymerase during DNA replication.</text>
</comment>
<comment type="catalytic activity">
    <reaction evidence="1">
        <text>ssDNA + n NTP = ssDNA/pppN(pN)n-1 hybrid + (n-1) diphosphate.</text>
        <dbReference type="EC" id="2.7.7.101"/>
    </reaction>
</comment>
<comment type="cofactor">
    <cofactor evidence="1">
        <name>Zn(2+)</name>
        <dbReference type="ChEBI" id="CHEBI:29105"/>
    </cofactor>
    <text evidence="1">Binds 1 zinc ion per monomer.</text>
</comment>
<comment type="cofactor">
    <cofactor evidence="1">
        <name>Mg(2+)</name>
        <dbReference type="ChEBI" id="CHEBI:18420"/>
    </cofactor>
    <text evidence="1">Binds two Mg(2+) per subunit.</text>
</comment>
<comment type="subunit">
    <text evidence="1">Monomer. Interacts with DnaB.</text>
</comment>
<comment type="domain">
    <text evidence="1">Contains an N-terminal zinc-binding domain, a central core domain that contains the primase activity, and a C-terminal DnaB-binding domain.</text>
</comment>
<comment type="similarity">
    <text evidence="1">Belongs to the DnaG primase family.</text>
</comment>
<evidence type="ECO:0000255" key="1">
    <source>
        <dbReference type="HAMAP-Rule" id="MF_00974"/>
    </source>
</evidence>
<sequence>MAGRIPRVFINDLLARTDIVDLIDARVKLKKQGKNFHACCPFHNEKTPSFTVNGEKQFYHCFGCGAHGNAIDFLMNYDKLEFVETVEELAAMHNLEVPFEAGSGPSQIERHQRQTLYQLMDGLNTFYQQSLQQPVATSARQYLEKRGLSHEVIARFAIGFAPPGWDNVLKRFGGNPENRQSLVDAGMLVTNDQGRSYDRFRERVMFPIRDKRGRVIGFGGRVLGNDTPKYLNSPETDIFHKGRQLYGLYEAQQDNAEPNRLLVVEGYMDVVALAQYGINYAVASLGTSTTADHIQLLFRATNNVICCYDGDRAGRDAAWRALETALPYMTDGRQLRFMFLPDGEDPDTLVRKEGKEAFEARMEQAMPLSAFLFNSLMPQVDLSTPDGRARLSTLALPLISQVPGETLRIYLRQELGNKLGILDDSQLERLMPKAAESGVSRPVPQLKRTTMRILIGLLVQNPELATLVPPLENLDENKLPGLGLFRELVNTCLSQPGLTTGQLLEHYRGTNNAATLEKLSMWDDIADKNIAEQTFTDSLNHMFDSLLELRQEELIARERTHGLSNEERLELWTLNQELAKK</sequence>
<feature type="chain" id="PRO_0000180492" description="DNA primase">
    <location>
        <begin position="1"/>
        <end position="581"/>
    </location>
</feature>
<feature type="domain" description="Toprim" evidence="1">
    <location>
        <begin position="259"/>
        <end position="341"/>
    </location>
</feature>
<feature type="zinc finger region" description="CHC2-type" evidence="1">
    <location>
        <begin position="40"/>
        <end position="64"/>
    </location>
</feature>
<feature type="binding site" evidence="1">
    <location>
        <position position="265"/>
    </location>
    <ligand>
        <name>Mg(2+)</name>
        <dbReference type="ChEBI" id="CHEBI:18420"/>
        <label>1</label>
        <note>catalytic</note>
    </ligand>
</feature>
<feature type="binding site" evidence="1">
    <location>
        <position position="309"/>
    </location>
    <ligand>
        <name>Mg(2+)</name>
        <dbReference type="ChEBI" id="CHEBI:18420"/>
        <label>1</label>
        <note>catalytic</note>
    </ligand>
</feature>
<feature type="binding site" evidence="1">
    <location>
        <position position="309"/>
    </location>
    <ligand>
        <name>Mg(2+)</name>
        <dbReference type="ChEBI" id="CHEBI:18420"/>
        <label>2</label>
    </ligand>
</feature>
<feature type="binding site" evidence="1">
    <location>
        <position position="311"/>
    </location>
    <ligand>
        <name>Mg(2+)</name>
        <dbReference type="ChEBI" id="CHEBI:18420"/>
        <label>2</label>
    </ligand>
</feature>
<organism>
    <name type="scientific">Escherichia coli O6:H1 (strain CFT073 / ATCC 700928 / UPEC)</name>
    <dbReference type="NCBI Taxonomy" id="199310"/>
    <lineage>
        <taxon>Bacteria</taxon>
        <taxon>Pseudomonadati</taxon>
        <taxon>Pseudomonadota</taxon>
        <taxon>Gammaproteobacteria</taxon>
        <taxon>Enterobacterales</taxon>
        <taxon>Enterobacteriaceae</taxon>
        <taxon>Escherichia</taxon>
    </lineage>
</organism>
<gene>
    <name evidence="1" type="primary">dnaG</name>
    <name type="ordered locus">c3817</name>
</gene>